<evidence type="ECO:0000250" key="1">
    <source>
        <dbReference type="UniProtKB" id="P81783"/>
    </source>
</evidence>
<evidence type="ECO:0000269" key="2">
    <source>
    </source>
</evidence>
<evidence type="ECO:0000303" key="3">
    <source>
    </source>
</evidence>
<evidence type="ECO:0000305" key="4"/>
<comment type="function">
    <text evidence="2">Produces peripheral paralysis by blocking neuromuscular transmission at the postsynaptic site. Weak inhibitor of the endogenous nicotinic acetylcholine receptors (nAChR) in the human rhabdomyosarcoma TE 671 cell line with an IC(50) of 690 mM. This neurotoxin is lethal to zebrafish by injection at the back of the dorsolateral region, but is not toxic to mice by intraperitoneal injection.</text>
</comment>
<comment type="subcellular location">
    <subcellularLocation>
        <location evidence="2">Secreted</location>
    </subcellularLocation>
</comment>
<comment type="tissue specificity">
    <text evidence="4">Expressed by the venom gland.</text>
</comment>
<comment type="similarity">
    <text evidence="4">Belongs to the three-finger toxin family. Ancestral subfamily.</text>
</comment>
<dbReference type="SMR" id="P86098"/>
<dbReference type="GO" id="GO:0005576">
    <property type="term" value="C:extracellular region"/>
    <property type="evidence" value="ECO:0000314"/>
    <property type="project" value="UniProtKB"/>
</dbReference>
<dbReference type="GO" id="GO:0030550">
    <property type="term" value="F:acetylcholine receptor inhibitor activity"/>
    <property type="evidence" value="ECO:0000314"/>
    <property type="project" value="UniProtKB"/>
</dbReference>
<dbReference type="GO" id="GO:0099106">
    <property type="term" value="F:ion channel regulator activity"/>
    <property type="evidence" value="ECO:0007669"/>
    <property type="project" value="UniProtKB-KW"/>
</dbReference>
<dbReference type="GO" id="GO:0090729">
    <property type="term" value="F:toxin activity"/>
    <property type="evidence" value="ECO:0000314"/>
    <property type="project" value="UniProtKB"/>
</dbReference>
<dbReference type="GO" id="GO:0044504">
    <property type="term" value="P:modulation of receptor activity in another organism"/>
    <property type="evidence" value="ECO:0000314"/>
    <property type="project" value="UniProtKB"/>
</dbReference>
<dbReference type="CDD" id="cd00206">
    <property type="entry name" value="TFP_snake_toxin"/>
    <property type="match status" value="1"/>
</dbReference>
<dbReference type="FunFam" id="2.10.60.10:FF:000024">
    <property type="entry name" value="Cytotoxin 1"/>
    <property type="match status" value="1"/>
</dbReference>
<dbReference type="Gene3D" id="2.10.60.10">
    <property type="entry name" value="CD59"/>
    <property type="match status" value="1"/>
</dbReference>
<dbReference type="InterPro" id="IPR003571">
    <property type="entry name" value="Snake_3FTx"/>
</dbReference>
<dbReference type="InterPro" id="IPR045860">
    <property type="entry name" value="Snake_toxin-like_sf"/>
</dbReference>
<dbReference type="InterPro" id="IPR054131">
    <property type="entry name" value="Toxin_cobra-type"/>
</dbReference>
<dbReference type="Pfam" id="PF21947">
    <property type="entry name" value="Toxin_cobra-type"/>
    <property type="match status" value="1"/>
</dbReference>
<dbReference type="SUPFAM" id="SSF57302">
    <property type="entry name" value="Snake toxin-like"/>
    <property type="match status" value="1"/>
</dbReference>
<feature type="chain" id="PRO_0000371720" description="Long neurotoxin MS4" evidence="2">
    <location>
        <begin position="1"/>
        <end position="64"/>
    </location>
</feature>
<feature type="disulfide bond" evidence="1">
    <location>
        <begin position="3"/>
        <end position="24"/>
    </location>
</feature>
<feature type="disulfide bond" evidence="1">
    <location>
        <begin position="6"/>
        <end position="11"/>
    </location>
</feature>
<feature type="disulfide bond" evidence="1">
    <location>
        <begin position="17"/>
        <end position="41"/>
    </location>
</feature>
<feature type="disulfide bond" evidence="1">
    <location>
        <begin position="45"/>
        <end position="57"/>
    </location>
</feature>
<feature type="disulfide bond" evidence="1">
    <location>
        <begin position="58"/>
        <end position="63"/>
    </location>
</feature>
<proteinExistence type="evidence at protein level"/>
<accession>P86098</accession>
<keyword id="KW-0008">Acetylcholine receptor inhibiting toxin</keyword>
<keyword id="KW-0903">Direct protein sequencing</keyword>
<keyword id="KW-1015">Disulfide bond</keyword>
<keyword id="KW-0872">Ion channel impairing toxin</keyword>
<keyword id="KW-0528">Neurotoxin</keyword>
<keyword id="KW-0629">Postsynaptic neurotoxin</keyword>
<keyword id="KW-0964">Secreted</keyword>
<keyword id="KW-0800">Toxin</keyword>
<sequence length="64" mass="7312">LTCKTCPFNTCANSETCPAGKNICYQKKWEEHRGERIERRCVANCPKLGSNDKSLLCCRRDDCN</sequence>
<name>3NX4_MICSU</name>
<reference key="1">
    <citation type="journal article" date="2008" name="Proteomics">
        <title>Proteomic analysis of the venom from the fish eating coral snake Micrurus surinamensis: novel toxins, their function and phylogeny.</title>
        <authorList>
            <person name="Olamendi-Portugal T."/>
            <person name="Batista C.V.F."/>
            <person name="Restano-Cassulini R."/>
            <person name="Pando V."/>
            <person name="Villa-Hernandez O."/>
            <person name="Zavaleta-Martinez-Vargas A."/>
            <person name="Salas-Arruz M.C."/>
            <person name="Rodriguez de la Vega R.C."/>
            <person name="Becerril B."/>
            <person name="Possani L.D."/>
        </authorList>
    </citation>
    <scope>PROTEIN SEQUENCE</scope>
    <scope>FUNCTION</scope>
    <scope>SUBCELLULAR LOCATION</scope>
    <source>
        <tissue>Venom</tissue>
    </source>
</reference>
<organism>
    <name type="scientific">Micrurus surinamensis</name>
    <name type="common">Surinam coral snake</name>
    <dbReference type="NCBI Taxonomy" id="129470"/>
    <lineage>
        <taxon>Eukaryota</taxon>
        <taxon>Metazoa</taxon>
        <taxon>Chordata</taxon>
        <taxon>Craniata</taxon>
        <taxon>Vertebrata</taxon>
        <taxon>Euteleostomi</taxon>
        <taxon>Lepidosauria</taxon>
        <taxon>Squamata</taxon>
        <taxon>Bifurcata</taxon>
        <taxon>Unidentata</taxon>
        <taxon>Episquamata</taxon>
        <taxon>Toxicofera</taxon>
        <taxon>Serpentes</taxon>
        <taxon>Colubroidea</taxon>
        <taxon>Elapidae</taxon>
        <taxon>Elapinae</taxon>
        <taxon>Micrurus</taxon>
    </lineage>
</organism>
<protein>
    <recommendedName>
        <fullName evidence="3">Long neurotoxin MS4</fullName>
    </recommendedName>
</protein>